<evidence type="ECO:0000305" key="1"/>
<dbReference type="EC" id="3.2.1.4"/>
<dbReference type="IntAct" id="P0C2S2">
    <property type="interactions" value="1"/>
</dbReference>
<dbReference type="DrugBank" id="DB02379">
    <property type="generic name" value="Beta-D-Glucose"/>
</dbReference>
<dbReference type="GO" id="GO:0008810">
    <property type="term" value="F:cellulase activity"/>
    <property type="evidence" value="ECO:0007669"/>
    <property type="project" value="UniProtKB-EC"/>
</dbReference>
<dbReference type="GO" id="GO:0030245">
    <property type="term" value="P:cellulose catabolic process"/>
    <property type="evidence" value="ECO:0007669"/>
    <property type="project" value="UniProtKB-KW"/>
</dbReference>
<sequence>AGVPFNTKTPYGPT</sequence>
<gene>
    <name type="primary">celA</name>
</gene>
<proteinExistence type="evidence at protein level"/>
<reference key="1">
    <citation type="journal article" date="1996" name="Biochemistry">
        <title>Dissociation of the cellulosome of Clostridium thermocellum in the presence of ethylenediaminetetraacetic acid occurs with the formation of trucated polypeptides.</title>
        <authorList>
            <person name="Choi S.K."/>
            <person name="Ljungdahl L.G."/>
        </authorList>
    </citation>
    <scope>PROTEIN SEQUENCE</scope>
    <source>
        <strain>JW20</strain>
    </source>
</reference>
<keyword id="KW-0119">Carbohydrate metabolism</keyword>
<keyword id="KW-0136">Cellulose degradation</keyword>
<keyword id="KW-0903">Direct protein sequencing</keyword>
<keyword id="KW-0326">Glycosidase</keyword>
<keyword id="KW-0378">Hydrolase</keyword>
<keyword id="KW-0624">Polysaccharide degradation</keyword>
<organism>
    <name type="scientific">Acetivibrio thermocellus</name>
    <name type="common">Hungateiclostridium thermocellum</name>
    <name type="synonym">Clostridium thermocellum</name>
    <dbReference type="NCBI Taxonomy" id="1515"/>
    <lineage>
        <taxon>Bacteria</taxon>
        <taxon>Bacillati</taxon>
        <taxon>Bacillota</taxon>
        <taxon>Clostridia</taxon>
        <taxon>Eubacteriales</taxon>
        <taxon>Oscillospiraceae</taxon>
        <taxon>Acetivibrio</taxon>
    </lineage>
</organism>
<feature type="chain" id="PRO_0000007935" description="Endoglucanase A">
    <location>
        <begin position="1"/>
        <end position="14" status="greater than"/>
    </location>
</feature>
<feature type="non-terminal residue">
    <location>
        <position position="14"/>
    </location>
</feature>
<name>GUNA_ACETH</name>
<accession>P0C2S2</accession>
<accession>P04955</accession>
<comment type="function">
    <text>This enzyme catalyzes the endohydrolysis of 1,4-beta-glucosidic linkages in cellulose, lichenin and cereal beta-D-glucans.</text>
</comment>
<comment type="catalytic activity">
    <reaction>
        <text>Endohydrolysis of (1-&gt;4)-beta-D-glucosidic linkages in cellulose, lichenin and cereal beta-D-glucans.</text>
        <dbReference type="EC" id="3.2.1.4"/>
    </reaction>
</comment>
<comment type="similarity">
    <text evidence="1">Belongs to the glycosyl hydrolase 8 (cellulase D) family.</text>
</comment>
<protein>
    <recommendedName>
        <fullName>Endoglucanase A</fullName>
        <shortName>EGA</shortName>
        <ecNumber>3.2.1.4</ecNumber>
    </recommendedName>
    <alternativeName>
        <fullName>Cellulase A</fullName>
    </alternativeName>
    <alternativeName>
        <fullName>Endo-1,4-beta-glucanase</fullName>
    </alternativeName>
</protein>